<accession>Q52KU6</accession>
<dbReference type="EC" id="3.1.3.95" evidence="2"/>
<dbReference type="EMBL" id="BC094184">
    <property type="protein sequence ID" value="AAH94184.1"/>
    <property type="molecule type" value="mRNA"/>
</dbReference>
<dbReference type="RefSeq" id="NP_001089410.1">
    <property type="nucleotide sequence ID" value="NM_001095941.1"/>
</dbReference>
<dbReference type="RefSeq" id="XP_018087605.1">
    <property type="nucleotide sequence ID" value="XM_018232116.1"/>
</dbReference>
<dbReference type="RefSeq" id="XP_018087606.1">
    <property type="nucleotide sequence ID" value="XM_018232117.1"/>
</dbReference>
<dbReference type="RefSeq" id="XP_018087607.1">
    <property type="nucleotide sequence ID" value="XM_018232118.1"/>
</dbReference>
<dbReference type="RefSeq" id="XP_018087608.1">
    <property type="nucleotide sequence ID" value="XM_018232119.1"/>
</dbReference>
<dbReference type="SMR" id="Q52KU6"/>
<dbReference type="BioGRID" id="592241">
    <property type="interactions" value="1"/>
</dbReference>
<dbReference type="IntAct" id="Q52KU6">
    <property type="interactions" value="1"/>
</dbReference>
<dbReference type="DNASU" id="734460"/>
<dbReference type="GeneID" id="734460"/>
<dbReference type="KEGG" id="xla:734460"/>
<dbReference type="AGR" id="Xenbase:XB-GENE-6256190"/>
<dbReference type="CTD" id="734460"/>
<dbReference type="OMA" id="FENKETY"/>
<dbReference type="OrthoDB" id="271628at2759"/>
<dbReference type="Proteomes" id="UP000186698">
    <property type="component" value="Chromosome 8S"/>
</dbReference>
<dbReference type="Bgee" id="734460">
    <property type="expression patterns" value="Expressed in gastrula and 19 other cell types or tissues"/>
</dbReference>
<dbReference type="GO" id="GO:0005737">
    <property type="term" value="C:cytoplasm"/>
    <property type="evidence" value="ECO:0000318"/>
    <property type="project" value="GO_Central"/>
</dbReference>
<dbReference type="GO" id="GO:0030175">
    <property type="term" value="C:filopodium"/>
    <property type="evidence" value="ECO:0007669"/>
    <property type="project" value="UniProtKB-SubCell"/>
</dbReference>
<dbReference type="GO" id="GO:0005770">
    <property type="term" value="C:late endosome"/>
    <property type="evidence" value="ECO:0007669"/>
    <property type="project" value="UniProtKB-SubCell"/>
</dbReference>
<dbReference type="GO" id="GO:0016020">
    <property type="term" value="C:membrane"/>
    <property type="evidence" value="ECO:0000318"/>
    <property type="project" value="GO_Central"/>
</dbReference>
<dbReference type="GO" id="GO:0005886">
    <property type="term" value="C:plasma membrane"/>
    <property type="evidence" value="ECO:0007669"/>
    <property type="project" value="UniProtKB-SubCell"/>
</dbReference>
<dbReference type="GO" id="GO:0001726">
    <property type="term" value="C:ruffle"/>
    <property type="evidence" value="ECO:0007669"/>
    <property type="project" value="UniProtKB-SubCell"/>
</dbReference>
<dbReference type="GO" id="GO:0030017">
    <property type="term" value="C:sarcomere"/>
    <property type="evidence" value="ECO:0007669"/>
    <property type="project" value="UniProtKB-SubCell"/>
</dbReference>
<dbReference type="GO" id="GO:0052629">
    <property type="term" value="F:phosphatidylinositol-3,5-bisphosphate 3-phosphatase activity"/>
    <property type="evidence" value="ECO:0000318"/>
    <property type="project" value="GO_Central"/>
</dbReference>
<dbReference type="GO" id="GO:0004438">
    <property type="term" value="F:phosphatidylinositol-3-phosphate phosphatase activity"/>
    <property type="evidence" value="ECO:0000318"/>
    <property type="project" value="GO_Central"/>
</dbReference>
<dbReference type="GO" id="GO:0004721">
    <property type="term" value="F:phosphoprotein phosphatase activity"/>
    <property type="evidence" value="ECO:0007669"/>
    <property type="project" value="UniProtKB-KW"/>
</dbReference>
<dbReference type="GO" id="GO:0048311">
    <property type="term" value="P:mitochondrion distribution"/>
    <property type="evidence" value="ECO:0000318"/>
    <property type="project" value="GO_Central"/>
</dbReference>
<dbReference type="GO" id="GO:0046716">
    <property type="term" value="P:muscle cell cellular homeostasis"/>
    <property type="evidence" value="ECO:0000318"/>
    <property type="project" value="GO_Central"/>
</dbReference>
<dbReference type="GO" id="GO:1902902">
    <property type="term" value="P:negative regulation of autophagosome assembly"/>
    <property type="evidence" value="ECO:0000318"/>
    <property type="project" value="GO_Central"/>
</dbReference>
<dbReference type="GO" id="GO:0046856">
    <property type="term" value="P:phosphatidylinositol dephosphorylation"/>
    <property type="evidence" value="ECO:0000318"/>
    <property type="project" value="GO_Central"/>
</dbReference>
<dbReference type="CDD" id="cd13355">
    <property type="entry name" value="PH-GRAM_MTM1"/>
    <property type="match status" value="1"/>
</dbReference>
<dbReference type="CDD" id="cd14591">
    <property type="entry name" value="PTP-MTM1"/>
    <property type="match status" value="1"/>
</dbReference>
<dbReference type="FunFam" id="2.30.29.30:FF:000038">
    <property type="entry name" value="Myotubularin 1, isoform CRA_a"/>
    <property type="match status" value="1"/>
</dbReference>
<dbReference type="Gene3D" id="2.30.29.30">
    <property type="entry name" value="Pleckstrin-homology domain (PH domain)/Phosphotyrosine-binding domain (PTB)"/>
    <property type="match status" value="1"/>
</dbReference>
<dbReference type="InterPro" id="IPR004182">
    <property type="entry name" value="GRAM"/>
</dbReference>
<dbReference type="InterPro" id="IPR030564">
    <property type="entry name" value="Myotubularin"/>
</dbReference>
<dbReference type="InterPro" id="IPR010569">
    <property type="entry name" value="Myotubularin-like_Pase_dom"/>
</dbReference>
<dbReference type="InterPro" id="IPR011993">
    <property type="entry name" value="PH-like_dom_sf"/>
</dbReference>
<dbReference type="InterPro" id="IPR029021">
    <property type="entry name" value="Prot-tyrosine_phosphatase-like"/>
</dbReference>
<dbReference type="InterPro" id="IPR016130">
    <property type="entry name" value="Tyr_Pase_AS"/>
</dbReference>
<dbReference type="InterPro" id="IPR003595">
    <property type="entry name" value="Tyr_Pase_cat"/>
</dbReference>
<dbReference type="InterPro" id="IPR000387">
    <property type="entry name" value="Tyr_Pase_dom"/>
</dbReference>
<dbReference type="PANTHER" id="PTHR10807:SF69">
    <property type="entry name" value="MYOTUBULARIN"/>
    <property type="match status" value="1"/>
</dbReference>
<dbReference type="PANTHER" id="PTHR10807">
    <property type="entry name" value="MYOTUBULARIN-RELATED"/>
    <property type="match status" value="1"/>
</dbReference>
<dbReference type="Pfam" id="PF02893">
    <property type="entry name" value="GRAM"/>
    <property type="match status" value="1"/>
</dbReference>
<dbReference type="Pfam" id="PF06602">
    <property type="entry name" value="Myotub-related"/>
    <property type="match status" value="1"/>
</dbReference>
<dbReference type="SMART" id="SM00568">
    <property type="entry name" value="GRAM"/>
    <property type="match status" value="1"/>
</dbReference>
<dbReference type="SMART" id="SM00404">
    <property type="entry name" value="PTPc_motif"/>
    <property type="match status" value="1"/>
</dbReference>
<dbReference type="SUPFAM" id="SSF52799">
    <property type="entry name" value="(Phosphotyrosine protein) phosphatases II"/>
    <property type="match status" value="1"/>
</dbReference>
<dbReference type="SUPFAM" id="SSF50729">
    <property type="entry name" value="PH domain-like"/>
    <property type="match status" value="1"/>
</dbReference>
<dbReference type="PROSITE" id="PS51339">
    <property type="entry name" value="PPASE_MYOTUBULARIN"/>
    <property type="match status" value="1"/>
</dbReference>
<dbReference type="PROSITE" id="PS00383">
    <property type="entry name" value="TYR_PHOSPHATASE_1"/>
    <property type="match status" value="1"/>
</dbReference>
<dbReference type="PROSITE" id="PS50056">
    <property type="entry name" value="TYR_PHOSPHATASE_2"/>
    <property type="match status" value="1"/>
</dbReference>
<comment type="function">
    <text evidence="2">Lipid phosphatase which dephosphorylates phosphatidylinositol 3-monophosphate (PI3P) and phosphatidylinositol 3,5-bisphosphate (PI(3,5)P2).</text>
</comment>
<comment type="catalytic activity">
    <reaction evidence="2">
        <text>a 1,2-diacyl-sn-glycero-3-phospho-(1D-myo-inositol-3-phosphate) + H2O = a 1,2-diacyl-sn-glycero-3-phospho-(1D-myo-inositol) + phosphate</text>
        <dbReference type="Rhea" id="RHEA:12316"/>
        <dbReference type="ChEBI" id="CHEBI:15377"/>
        <dbReference type="ChEBI" id="CHEBI:43474"/>
        <dbReference type="ChEBI" id="CHEBI:57880"/>
        <dbReference type="ChEBI" id="CHEBI:58088"/>
    </reaction>
</comment>
<comment type="catalytic activity">
    <reaction evidence="2">
        <text>a 1,2-diacyl-sn-glycero-3-phospho-(1D-myo-inositol-3,5-bisphosphate) + H2O = a 1,2-diacyl-sn-glycero-3-phospho-(1D-myo-inositol-5-phosphate) + phosphate</text>
        <dbReference type="Rhea" id="RHEA:39019"/>
        <dbReference type="ChEBI" id="CHEBI:15377"/>
        <dbReference type="ChEBI" id="CHEBI:43474"/>
        <dbReference type="ChEBI" id="CHEBI:57795"/>
        <dbReference type="ChEBI" id="CHEBI:57923"/>
        <dbReference type="EC" id="3.1.3.95"/>
    </reaction>
</comment>
<comment type="catalytic activity">
    <reaction evidence="2">
        <text>1,2-dioctanoyl-sn-glycero-3-phospho-(1-D-myo-inositol-3-phosphate) + H2O = 1,2-dioctanoyl-sn-glycero-3-phospho-(1D-myo-inositol) + phosphate</text>
        <dbReference type="Rhea" id="RHEA:42328"/>
        <dbReference type="ChEBI" id="CHEBI:15377"/>
        <dbReference type="ChEBI" id="CHEBI:43474"/>
        <dbReference type="ChEBI" id="CHEBI:65221"/>
        <dbReference type="ChEBI" id="CHEBI:78934"/>
    </reaction>
</comment>
<comment type="catalytic activity">
    <reaction evidence="2">
        <text>1,2-dioctanoyl-sn-glycero-3-phospho-(1D-myo-inositol-3,5-bisphosphate) + H2O = 1,2-dioctanoyl-sn-glycero-3-phospho-(1D-myo-inositol-5-phosphate) + phosphate</text>
        <dbReference type="Rhea" id="RHEA:45632"/>
        <dbReference type="ChEBI" id="CHEBI:15377"/>
        <dbReference type="ChEBI" id="CHEBI:43474"/>
        <dbReference type="ChEBI" id="CHEBI:78911"/>
        <dbReference type="ChEBI" id="CHEBI:85342"/>
    </reaction>
</comment>
<comment type="catalytic activity">
    <reaction evidence="2">
        <text>1,2-dihexadecanoyl-sn-glycero-3-phospho-(1D-myo-inositol-3,5-phosphate) + H2O = 1,2-dihexadecanoyl-sn-glycero-3-phospho-(1D-myo-inositol-5-phosphate) + phosphate</text>
        <dbReference type="Rhea" id="RHEA:45636"/>
        <dbReference type="ChEBI" id="CHEBI:15377"/>
        <dbReference type="ChEBI" id="CHEBI:43474"/>
        <dbReference type="ChEBI" id="CHEBI:78994"/>
        <dbReference type="ChEBI" id="CHEBI:84968"/>
    </reaction>
</comment>
<comment type="subcellular location">
    <subcellularLocation>
        <location evidence="2">Cytoplasm</location>
    </subcellularLocation>
    <subcellularLocation>
        <location evidence="2">Cell membrane</location>
        <topology evidence="2">Peripheral membrane protein</topology>
    </subcellularLocation>
    <subcellularLocation>
        <location evidence="1">Cell projection</location>
        <location evidence="1">Filopodium</location>
    </subcellularLocation>
    <subcellularLocation>
        <location evidence="2">Cell projection</location>
        <location evidence="2">Ruffle</location>
    </subcellularLocation>
    <subcellularLocation>
        <location evidence="2">Late endosome</location>
    </subcellularLocation>
    <subcellularLocation>
        <location evidence="4">Cytoplasm</location>
        <location evidence="4">Myofibril</location>
        <location evidence="4">Sarcomere</location>
    </subcellularLocation>
</comment>
<comment type="domain">
    <text evidence="2">The GRAM domain mediates binding to PI(3,5)P2 and, with lower affinity, to other phosphoinositides.</text>
</comment>
<comment type="similarity">
    <text evidence="8">Belongs to the protein-tyrosine phosphatase family. Non-receptor class myotubularin subfamily.</text>
</comment>
<name>MTM1_XENLA</name>
<organism>
    <name type="scientific">Xenopus laevis</name>
    <name type="common">African clawed frog</name>
    <dbReference type="NCBI Taxonomy" id="8355"/>
    <lineage>
        <taxon>Eukaryota</taxon>
        <taxon>Metazoa</taxon>
        <taxon>Chordata</taxon>
        <taxon>Craniata</taxon>
        <taxon>Vertebrata</taxon>
        <taxon>Euteleostomi</taxon>
        <taxon>Amphibia</taxon>
        <taxon>Batrachia</taxon>
        <taxon>Anura</taxon>
        <taxon>Pipoidea</taxon>
        <taxon>Pipidae</taxon>
        <taxon>Xenopodinae</taxon>
        <taxon>Xenopus</taxon>
        <taxon>Xenopus</taxon>
    </lineage>
</organism>
<sequence length="602" mass="69730">MATSSTPKYNSNSLENSVRRSPGDGINHEQNDEISRLPGETLITDKEVIYMCPFYGPVKGRIYVTNYKLYFKGEEMEPLITFAVPLGVIARIEKMGGASSRGENSYGLDITCKDMRNLRFALKQEVHSRKQIFEDLTKYAFPLSHGLLFFAFQNEEKFPENGWAVYDAMTEFRRQGLPNDQWRITFINRNYELCDTYPPLLVVPYSASEEDLKRVAAFRSRNRIPVLSWLHPENQSAIMRCSQPLVGMSGKRNKDDERYLDIIRETNGQTSKLTIYDARPNVNAVANKATGGGYENEDAYPNAELVFLDIHNIHVMRESLKKLKDIVYPNVEESHWLSSLESTHWLEHIKLVLTGAIQVADKVASGKSSVVVHCSDGWDRTAQLTSLAMLMLDSYYRTIVGFEVLVQKEWISFGHKFSSRIGHGDKNHADADRSPIFLQFIDCVWQMSKQFPTAFEFNEHFLITILDHLYSCRFGTFLYNCETIRDKEKVREKTPSLWSLISSEKSKYTNPFYTKELNRVLYPVASMRHLELWVNYYIRWNPRIRQQQPNPVEQRYMELLALRDDYVRRLEELQISNSPKINRSTTSPSSPSQMMPQVQTPF</sequence>
<evidence type="ECO:0000250" key="1"/>
<evidence type="ECO:0000250" key="2">
    <source>
        <dbReference type="UniProtKB" id="Q13496"/>
    </source>
</evidence>
<evidence type="ECO:0000250" key="3">
    <source>
        <dbReference type="UniProtKB" id="Q13614"/>
    </source>
</evidence>
<evidence type="ECO:0000250" key="4">
    <source>
        <dbReference type="UniProtKB" id="Q9Z2C5"/>
    </source>
</evidence>
<evidence type="ECO:0000255" key="5">
    <source>
        <dbReference type="PROSITE-ProRule" id="PRU00669"/>
    </source>
</evidence>
<evidence type="ECO:0000255" key="6">
    <source>
        <dbReference type="PROSITE-ProRule" id="PRU10044"/>
    </source>
</evidence>
<evidence type="ECO:0000256" key="7">
    <source>
        <dbReference type="SAM" id="MobiDB-lite"/>
    </source>
</evidence>
<evidence type="ECO:0000305" key="8"/>
<gene>
    <name type="primary">mtm1</name>
</gene>
<feature type="chain" id="PRO_0000328658" description="Myotubularin">
    <location>
        <begin position="1"/>
        <end position="602"/>
    </location>
</feature>
<feature type="domain" description="GRAM">
    <location>
        <begin position="28"/>
        <end position="96"/>
    </location>
</feature>
<feature type="domain" description="Myotubularin phosphatase" evidence="5">
    <location>
        <begin position="162"/>
        <end position="537"/>
    </location>
</feature>
<feature type="region of interest" description="Disordered" evidence="7">
    <location>
        <begin position="1"/>
        <end position="33"/>
    </location>
</feature>
<feature type="region of interest" description="Disordered" evidence="7">
    <location>
        <begin position="577"/>
        <end position="602"/>
    </location>
</feature>
<feature type="compositionally biased region" description="Polar residues" evidence="7">
    <location>
        <begin position="1"/>
        <end position="16"/>
    </location>
</feature>
<feature type="compositionally biased region" description="Basic and acidic residues" evidence="7">
    <location>
        <begin position="17"/>
        <end position="33"/>
    </location>
</feature>
<feature type="compositionally biased region" description="Low complexity" evidence="7">
    <location>
        <begin position="584"/>
        <end position="602"/>
    </location>
</feature>
<feature type="active site" description="Phosphocysteine intermediate" evidence="6">
    <location>
        <position position="374"/>
    </location>
</feature>
<feature type="binding site" evidence="3">
    <location>
        <position position="287"/>
    </location>
    <ligand>
        <name>a 1,2-diacyl-sn-glycero-3-phospho-(1D-myo-inositol-3,5-bisphosphate)</name>
        <dbReference type="ChEBI" id="CHEBI:57923"/>
    </ligand>
</feature>
<feature type="binding site" evidence="3">
    <location>
        <position position="287"/>
    </location>
    <ligand>
        <name>a 1,2-diacyl-sn-glycero-3-phospho-(1D-myo-inositol-3-phosphate)</name>
        <dbReference type="ChEBI" id="CHEBI:58088"/>
    </ligand>
</feature>
<feature type="binding site" evidence="3">
    <location>
        <position position="312"/>
    </location>
    <ligand>
        <name>a 1,2-diacyl-sn-glycero-3-phospho-(1D-myo-inositol-3,5-bisphosphate)</name>
        <dbReference type="ChEBI" id="CHEBI:57923"/>
    </ligand>
</feature>
<feature type="binding site" evidence="3">
    <location>
        <position position="312"/>
    </location>
    <ligand>
        <name>a 1,2-diacyl-sn-glycero-3-phospho-(1D-myo-inositol-3-phosphate)</name>
        <dbReference type="ChEBI" id="CHEBI:58088"/>
    </ligand>
</feature>
<feature type="binding site" evidence="3">
    <location>
        <position position="313"/>
    </location>
    <ligand>
        <name>a 1,2-diacyl-sn-glycero-3-phospho-(1D-myo-inositol-3,5-bisphosphate)</name>
        <dbReference type="ChEBI" id="CHEBI:57923"/>
    </ligand>
</feature>
<feature type="binding site" evidence="3">
    <location>
        <position position="313"/>
    </location>
    <ligand>
        <name>a 1,2-diacyl-sn-glycero-3-phospho-(1D-myo-inositol-3-phosphate)</name>
        <dbReference type="ChEBI" id="CHEBI:58088"/>
    </ligand>
</feature>
<feature type="binding site" evidence="3">
    <location>
        <position position="375"/>
    </location>
    <ligand>
        <name>a 1,2-diacyl-sn-glycero-3-phospho-(1D-myo-inositol-3,5-bisphosphate)</name>
        <dbReference type="ChEBI" id="CHEBI:57923"/>
    </ligand>
</feature>
<feature type="binding site" evidence="3">
    <location>
        <position position="375"/>
    </location>
    <ligand>
        <name>a 1,2-diacyl-sn-glycero-3-phospho-(1D-myo-inositol-3-phosphate)</name>
        <dbReference type="ChEBI" id="CHEBI:58088"/>
    </ligand>
</feature>
<feature type="binding site" evidence="3">
    <location>
        <position position="376"/>
    </location>
    <ligand>
        <name>a 1,2-diacyl-sn-glycero-3-phospho-(1D-myo-inositol-3,5-bisphosphate)</name>
        <dbReference type="ChEBI" id="CHEBI:57923"/>
    </ligand>
</feature>
<feature type="binding site" evidence="3">
    <location>
        <position position="376"/>
    </location>
    <ligand>
        <name>a 1,2-diacyl-sn-glycero-3-phospho-(1D-myo-inositol-3-phosphate)</name>
        <dbReference type="ChEBI" id="CHEBI:58088"/>
    </ligand>
</feature>
<feature type="binding site" evidence="3">
    <location>
        <position position="377"/>
    </location>
    <ligand>
        <name>a 1,2-diacyl-sn-glycero-3-phospho-(1D-myo-inositol-3,5-bisphosphate)</name>
        <dbReference type="ChEBI" id="CHEBI:57923"/>
    </ligand>
</feature>
<feature type="binding site" evidence="3">
    <location>
        <position position="377"/>
    </location>
    <ligand>
        <name>a 1,2-diacyl-sn-glycero-3-phospho-(1D-myo-inositol-3-phosphate)</name>
        <dbReference type="ChEBI" id="CHEBI:58088"/>
    </ligand>
</feature>
<feature type="binding site" evidence="3">
    <location>
        <position position="378"/>
    </location>
    <ligand>
        <name>a 1,2-diacyl-sn-glycero-3-phospho-(1D-myo-inositol-3,5-bisphosphate)</name>
        <dbReference type="ChEBI" id="CHEBI:57923"/>
    </ligand>
</feature>
<feature type="binding site" evidence="3">
    <location>
        <position position="378"/>
    </location>
    <ligand>
        <name>a 1,2-diacyl-sn-glycero-3-phospho-(1D-myo-inositol-3-phosphate)</name>
        <dbReference type="ChEBI" id="CHEBI:58088"/>
    </ligand>
</feature>
<feature type="binding site" evidence="3">
    <location>
        <position position="379"/>
    </location>
    <ligand>
        <name>a 1,2-diacyl-sn-glycero-3-phospho-(1D-myo-inositol-3,5-bisphosphate)</name>
        <dbReference type="ChEBI" id="CHEBI:57923"/>
    </ligand>
</feature>
<feature type="binding site" evidence="3">
    <location>
        <position position="379"/>
    </location>
    <ligand>
        <name>a 1,2-diacyl-sn-glycero-3-phospho-(1D-myo-inositol-3-phosphate)</name>
        <dbReference type="ChEBI" id="CHEBI:58088"/>
    </ligand>
</feature>
<feature type="binding site" evidence="3">
    <location>
        <position position="380"/>
    </location>
    <ligand>
        <name>a 1,2-diacyl-sn-glycero-3-phospho-(1D-myo-inositol-3,5-bisphosphate)</name>
        <dbReference type="ChEBI" id="CHEBI:57923"/>
    </ligand>
</feature>
<feature type="binding site" evidence="3">
    <location>
        <position position="380"/>
    </location>
    <ligand>
        <name>a 1,2-diacyl-sn-glycero-3-phospho-(1D-myo-inositol-3-phosphate)</name>
        <dbReference type="ChEBI" id="CHEBI:58088"/>
    </ligand>
</feature>
<feature type="binding site" evidence="3">
    <location>
        <position position="416"/>
    </location>
    <ligand>
        <name>a 1,2-diacyl-sn-glycero-3-phospho-(1D-myo-inositol-3,5-bisphosphate)</name>
        <dbReference type="ChEBI" id="CHEBI:57923"/>
    </ligand>
</feature>
<feature type="binding site" evidence="3">
    <location>
        <position position="420"/>
    </location>
    <ligand>
        <name>a 1,2-diacyl-sn-glycero-3-phospho-(1D-myo-inositol-3,5-bisphosphate)</name>
        <dbReference type="ChEBI" id="CHEBI:57923"/>
    </ligand>
</feature>
<feature type="binding site" evidence="3">
    <location>
        <position position="420"/>
    </location>
    <ligand>
        <name>a 1,2-diacyl-sn-glycero-3-phospho-(1D-myo-inositol-3-phosphate)</name>
        <dbReference type="ChEBI" id="CHEBI:58088"/>
    </ligand>
</feature>
<keyword id="KW-1003">Cell membrane</keyword>
<keyword id="KW-0966">Cell projection</keyword>
<keyword id="KW-0963">Cytoplasm</keyword>
<keyword id="KW-0967">Endosome</keyword>
<keyword id="KW-0378">Hydrolase</keyword>
<keyword id="KW-0443">Lipid metabolism</keyword>
<keyword id="KW-0472">Membrane</keyword>
<keyword id="KW-0904">Protein phosphatase</keyword>
<keyword id="KW-1185">Reference proteome</keyword>
<reference key="1">
    <citation type="submission" date="2005-04" db="EMBL/GenBank/DDBJ databases">
        <authorList>
            <consortium name="NIH - Xenopus Gene Collection (XGC) project"/>
        </authorList>
    </citation>
    <scope>NUCLEOTIDE SEQUENCE [LARGE SCALE MRNA]</scope>
    <source>
        <tissue>Oocyte</tissue>
    </source>
</reference>
<proteinExistence type="evidence at transcript level"/>
<protein>
    <recommendedName>
        <fullName evidence="2">Myotubularin</fullName>
        <ecNumber evidence="2">3.1.3.95</ecNumber>
    </recommendedName>
    <alternativeName>
        <fullName evidence="2">Phosphatidylinositol-3,5-bisphosphate 3-phosphatase</fullName>
    </alternativeName>
    <alternativeName>
        <fullName evidence="2">Phosphatidylinositol-3-phosphate phosphatase</fullName>
    </alternativeName>
</protein>